<feature type="chain" id="PRO_0000216983" description="UPF0297 protein SE_1300">
    <location>
        <begin position="1"/>
        <end position="86"/>
    </location>
</feature>
<protein>
    <recommendedName>
        <fullName evidence="1">UPF0297 protein SE_1300</fullName>
    </recommendedName>
</protein>
<organism>
    <name type="scientific">Staphylococcus epidermidis (strain ATCC 12228 / FDA PCI 1200)</name>
    <dbReference type="NCBI Taxonomy" id="176280"/>
    <lineage>
        <taxon>Bacteria</taxon>
        <taxon>Bacillati</taxon>
        <taxon>Bacillota</taxon>
        <taxon>Bacilli</taxon>
        <taxon>Bacillales</taxon>
        <taxon>Staphylococcaceae</taxon>
        <taxon>Staphylococcus</taxon>
    </lineage>
</organism>
<evidence type="ECO:0000255" key="1">
    <source>
        <dbReference type="HAMAP-Rule" id="MF_01507"/>
    </source>
</evidence>
<name>Y1300_STAES</name>
<reference key="1">
    <citation type="journal article" date="2003" name="Mol. Microbiol.">
        <title>Genome-based analysis of virulence genes in a non-biofilm-forming Staphylococcus epidermidis strain (ATCC 12228).</title>
        <authorList>
            <person name="Zhang Y.-Q."/>
            <person name="Ren S.-X."/>
            <person name="Li H.-L."/>
            <person name="Wang Y.-X."/>
            <person name="Fu G."/>
            <person name="Yang J."/>
            <person name="Qin Z.-Q."/>
            <person name="Miao Y.-G."/>
            <person name="Wang W.-Y."/>
            <person name="Chen R.-S."/>
            <person name="Shen Y."/>
            <person name="Chen Z."/>
            <person name="Yuan Z.-H."/>
            <person name="Zhao G.-P."/>
            <person name="Qu D."/>
            <person name="Danchin A."/>
            <person name="Wen Y.-M."/>
        </authorList>
    </citation>
    <scope>NUCLEOTIDE SEQUENCE [LARGE SCALE GENOMIC DNA]</scope>
    <source>
        <strain>ATCC 12228 / FDA PCI 1200</strain>
    </source>
</reference>
<accession>Q8CSA8</accession>
<sequence length="86" mass="10159">MENFDKTMKFSYEEIPKEDVKSVLQNVHRTLEERGYNAVNQIVGYLLSGDPAYIPRQNEARNQIRHIDRDVIMEELVSNYLKESKN</sequence>
<proteinExistence type="inferred from homology"/>
<comment type="similarity">
    <text evidence="1">Belongs to the UPF0297 family.</text>
</comment>
<dbReference type="EMBL" id="AE015929">
    <property type="protein sequence ID" value="AAO04899.1"/>
    <property type="molecule type" value="Genomic_DNA"/>
</dbReference>
<dbReference type="RefSeq" id="NP_764855.1">
    <property type="nucleotide sequence ID" value="NC_004461.1"/>
</dbReference>
<dbReference type="RefSeq" id="WP_001830883.1">
    <property type="nucleotide sequence ID" value="NZ_WBME01000053.1"/>
</dbReference>
<dbReference type="SMR" id="Q8CSA8"/>
<dbReference type="KEGG" id="sep:SE_1300"/>
<dbReference type="PATRIC" id="fig|176280.10.peg.1269"/>
<dbReference type="eggNOG" id="COG4472">
    <property type="taxonomic scope" value="Bacteria"/>
</dbReference>
<dbReference type="HOGENOM" id="CLU_162466_0_0_9"/>
<dbReference type="OrthoDB" id="9796303at2"/>
<dbReference type="Proteomes" id="UP000001411">
    <property type="component" value="Chromosome"/>
</dbReference>
<dbReference type="HAMAP" id="MF_01507">
    <property type="entry name" value="UPF0297"/>
    <property type="match status" value="1"/>
</dbReference>
<dbReference type="InterPro" id="IPR009309">
    <property type="entry name" value="IreB"/>
</dbReference>
<dbReference type="NCBIfam" id="NF003997">
    <property type="entry name" value="PRK05473.1"/>
    <property type="match status" value="1"/>
</dbReference>
<dbReference type="PANTHER" id="PTHR40067">
    <property type="entry name" value="UPF0297 PROTEIN YRZL"/>
    <property type="match status" value="1"/>
</dbReference>
<dbReference type="PANTHER" id="PTHR40067:SF1">
    <property type="entry name" value="UPF0297 PROTEIN YRZL"/>
    <property type="match status" value="1"/>
</dbReference>
<dbReference type="Pfam" id="PF06135">
    <property type="entry name" value="IreB"/>
    <property type="match status" value="1"/>
</dbReference>
<dbReference type="PIRSF" id="PIRSF037258">
    <property type="entry name" value="DUF965_bac"/>
    <property type="match status" value="1"/>
</dbReference>
<gene>
    <name type="ordered locus">SE_1300</name>
</gene>